<protein>
    <recommendedName>
        <fullName evidence="1">Enolase-phosphatase E1</fullName>
        <ecNumber evidence="1">3.1.3.77</ecNumber>
    </recommendedName>
    <alternativeName>
        <fullName evidence="1">2,3-diketo-5-methylthio-1-phosphopentane phosphatase</fullName>
    </alternativeName>
</protein>
<feature type="chain" id="PRO_0000357432" description="Enolase-phosphatase E1">
    <location>
        <begin position="1"/>
        <end position="232"/>
    </location>
</feature>
<feature type="sequence conflict" description="In Ref. 1; AAT48366." evidence="2" ref="1">
    <original>I</original>
    <variation>M</variation>
    <location>
        <position position="198"/>
    </location>
</feature>
<feature type="sequence conflict" description="In Ref. 1; AAT48366." evidence="2" ref="1">
    <original>S</original>
    <variation>N</variation>
    <location>
        <position position="226"/>
    </location>
</feature>
<reference key="1">
    <citation type="submission" date="2007-01" db="EMBL/GenBank/DDBJ databases">
        <title>Overexpression of the enolase-phosphatase-like gene in vivo reduces the fitness of Xanthomonas oryzae pv. oryzae in rice cultivars.</title>
        <authorList>
            <person name="Zhang Y."/>
            <person name="Wang J."/>
        </authorList>
    </citation>
    <scope>NUCLEOTIDE SEQUENCE [GENOMIC DNA]</scope>
</reference>
<reference key="2">
    <citation type="journal article" date="2005" name="Nucleic Acids Res.">
        <title>The genome sequence of Xanthomonas oryzae pathovar oryzae KACC10331, the bacterial blight pathogen of rice.</title>
        <authorList>
            <person name="Lee B.-M."/>
            <person name="Park Y.-J."/>
            <person name="Park D.-S."/>
            <person name="Kang H.-W."/>
            <person name="Kim J.-G."/>
            <person name="Song E.-S."/>
            <person name="Park I.-C."/>
            <person name="Yoon U.-H."/>
            <person name="Hahn J.-H."/>
            <person name="Koo B.-S."/>
            <person name="Lee G.-B."/>
            <person name="Kim H."/>
            <person name="Park H.-S."/>
            <person name="Yoon K.-O."/>
            <person name="Kim J.-H."/>
            <person name="Jung C.-H."/>
            <person name="Koh N.-H."/>
            <person name="Seo J.-S."/>
            <person name="Go S.-J."/>
        </authorList>
    </citation>
    <scope>NUCLEOTIDE SEQUENCE [LARGE SCALE GENOMIC DNA]</scope>
    <source>
        <strain>KACC10331 / KXO85</strain>
    </source>
</reference>
<sequence length="232" mass="25931">MTRPQAILTDIEGTTSSISFVKDVLFPYARRAMPAYVREHGNHPQVRHWLNQVADEIGEDVPDDVLITTLQTWIDEDRKHTALKALQGLIWGDGYKIADFTAHMYADAALQLQAWHAAGIPLYVYSSGSVPAQKLFFAHSDAGDLSGLVSDWFDTEVGSKREAASYRRIAERIGVPASEILFLSDVIEELDAAKRTGIRTALLERREDYPTPRSADDVGSHQRVESFSQLVF</sequence>
<proteinExistence type="inferred from homology"/>
<evidence type="ECO:0000255" key="1">
    <source>
        <dbReference type="HAMAP-Rule" id="MF_01681"/>
    </source>
</evidence>
<evidence type="ECO:0000305" key="2"/>
<organism>
    <name type="scientific">Xanthomonas oryzae pv. oryzae (strain KACC10331 / KXO85)</name>
    <dbReference type="NCBI Taxonomy" id="291331"/>
    <lineage>
        <taxon>Bacteria</taxon>
        <taxon>Pseudomonadati</taxon>
        <taxon>Pseudomonadota</taxon>
        <taxon>Gammaproteobacteria</taxon>
        <taxon>Lysobacterales</taxon>
        <taxon>Lysobacteraceae</taxon>
        <taxon>Xanthomonas</taxon>
    </lineage>
</organism>
<name>MTNC_XANOR</name>
<keyword id="KW-0028">Amino-acid biosynthesis</keyword>
<keyword id="KW-0378">Hydrolase</keyword>
<keyword id="KW-0460">Magnesium</keyword>
<keyword id="KW-0479">Metal-binding</keyword>
<keyword id="KW-0486">Methionine biosynthesis</keyword>
<keyword id="KW-1185">Reference proteome</keyword>
<accession>Q5H0Y0</accession>
<accession>Q6GYR5</accession>
<dbReference type="EC" id="3.1.3.77" evidence="1"/>
<dbReference type="EMBL" id="AY588249">
    <property type="protein sequence ID" value="AAT48366.2"/>
    <property type="molecule type" value="Genomic_DNA"/>
</dbReference>
<dbReference type="EMBL" id="AE013598">
    <property type="protein sequence ID" value="AAW75391.1"/>
    <property type="molecule type" value="Genomic_DNA"/>
</dbReference>
<dbReference type="SMR" id="Q5H0Y0"/>
<dbReference type="STRING" id="291331.XOO2137"/>
<dbReference type="KEGG" id="xoo:XOO2137"/>
<dbReference type="HOGENOM" id="CLU_023273_0_0_6"/>
<dbReference type="BRENDA" id="3.1.3.77">
    <property type="organism ID" value="9368"/>
</dbReference>
<dbReference type="BRENDA" id="4.2.1.11">
    <property type="organism ID" value="6717"/>
</dbReference>
<dbReference type="UniPathway" id="UPA00904">
    <property type="reaction ID" value="UER00876"/>
</dbReference>
<dbReference type="UniPathway" id="UPA00904">
    <property type="reaction ID" value="UER00877"/>
</dbReference>
<dbReference type="Proteomes" id="UP000006735">
    <property type="component" value="Chromosome"/>
</dbReference>
<dbReference type="GO" id="GO:0043715">
    <property type="term" value="F:2,3-diketo-5-methylthiopentyl-1-phosphate enolase activity"/>
    <property type="evidence" value="ECO:0007669"/>
    <property type="project" value="UniProtKB-UniRule"/>
</dbReference>
<dbReference type="GO" id="GO:0043716">
    <property type="term" value="F:2-hydroxy-3-keto-5-methylthiopentenyl-1-phosphate phosphatase activity"/>
    <property type="evidence" value="ECO:0007669"/>
    <property type="project" value="UniProtKB-UniRule"/>
</dbReference>
<dbReference type="GO" id="GO:0043874">
    <property type="term" value="F:acireductone synthase activity"/>
    <property type="evidence" value="ECO:0007669"/>
    <property type="project" value="UniProtKB-EC"/>
</dbReference>
<dbReference type="GO" id="GO:0000287">
    <property type="term" value="F:magnesium ion binding"/>
    <property type="evidence" value="ECO:0007669"/>
    <property type="project" value="UniProtKB-UniRule"/>
</dbReference>
<dbReference type="GO" id="GO:0019509">
    <property type="term" value="P:L-methionine salvage from methylthioadenosine"/>
    <property type="evidence" value="ECO:0007669"/>
    <property type="project" value="UniProtKB-UniRule"/>
</dbReference>
<dbReference type="CDD" id="cd01629">
    <property type="entry name" value="HAD_EP"/>
    <property type="match status" value="1"/>
</dbReference>
<dbReference type="FunFam" id="1.10.720.60:FF:000003">
    <property type="entry name" value="Enolase-phosphatase E1"/>
    <property type="match status" value="1"/>
</dbReference>
<dbReference type="FunFam" id="3.40.50.1000:FF:000079">
    <property type="entry name" value="Enolase-phosphatase E1"/>
    <property type="match status" value="1"/>
</dbReference>
<dbReference type="Gene3D" id="1.10.720.60">
    <property type="match status" value="1"/>
</dbReference>
<dbReference type="Gene3D" id="3.40.50.1000">
    <property type="entry name" value="HAD superfamily/HAD-like"/>
    <property type="match status" value="1"/>
</dbReference>
<dbReference type="HAMAP" id="MF_01681">
    <property type="entry name" value="Salvage_MtnC"/>
    <property type="match status" value="1"/>
</dbReference>
<dbReference type="InterPro" id="IPR023943">
    <property type="entry name" value="Enolase-ppase_E1"/>
</dbReference>
<dbReference type="InterPro" id="IPR036412">
    <property type="entry name" value="HAD-like_sf"/>
</dbReference>
<dbReference type="InterPro" id="IPR006439">
    <property type="entry name" value="HAD-SF_hydro_IA"/>
</dbReference>
<dbReference type="InterPro" id="IPR023214">
    <property type="entry name" value="HAD_sf"/>
</dbReference>
<dbReference type="NCBIfam" id="TIGR01691">
    <property type="entry name" value="enolase-ppase"/>
    <property type="match status" value="1"/>
</dbReference>
<dbReference type="NCBIfam" id="TIGR01549">
    <property type="entry name" value="HAD-SF-IA-v1"/>
    <property type="match status" value="1"/>
</dbReference>
<dbReference type="PANTHER" id="PTHR20371">
    <property type="entry name" value="ENOLASE-PHOSPHATASE E1"/>
    <property type="match status" value="1"/>
</dbReference>
<dbReference type="PANTHER" id="PTHR20371:SF1">
    <property type="entry name" value="ENOLASE-PHOSPHATASE E1"/>
    <property type="match status" value="1"/>
</dbReference>
<dbReference type="Pfam" id="PF00702">
    <property type="entry name" value="Hydrolase"/>
    <property type="match status" value="1"/>
</dbReference>
<dbReference type="PRINTS" id="PR00413">
    <property type="entry name" value="HADHALOGNASE"/>
</dbReference>
<dbReference type="SFLD" id="SFLDG01133">
    <property type="entry name" value="C1.5.4:_Enolase-phosphatase_Li"/>
    <property type="match status" value="1"/>
</dbReference>
<dbReference type="SFLD" id="SFLDF00044">
    <property type="entry name" value="enolase-phosphatase"/>
    <property type="match status" value="1"/>
</dbReference>
<dbReference type="SUPFAM" id="SSF56784">
    <property type="entry name" value="HAD-like"/>
    <property type="match status" value="1"/>
</dbReference>
<gene>
    <name evidence="1" type="primary">mtnC</name>
    <name type="ordered locus">XOO2137</name>
</gene>
<comment type="function">
    <text evidence="1">Bifunctional enzyme that catalyzes the enolization of 2,3-diketo-5-methylthiopentyl-1-phosphate (DK-MTP-1-P) into the intermediate 2-hydroxy-3-keto-5-methylthiopentenyl-1-phosphate (HK-MTPenyl-1-P), which is then dephosphorylated to form the acireductone 1,2-dihydroxy-3-keto-5-methylthiopentene (DHK-MTPene).</text>
</comment>
<comment type="catalytic activity">
    <reaction evidence="1">
        <text>5-methylsulfanyl-2,3-dioxopentyl phosphate + H2O = 1,2-dihydroxy-5-(methylsulfanyl)pent-1-en-3-one + phosphate</text>
        <dbReference type="Rhea" id="RHEA:21700"/>
        <dbReference type="ChEBI" id="CHEBI:15377"/>
        <dbReference type="ChEBI" id="CHEBI:43474"/>
        <dbReference type="ChEBI" id="CHEBI:49252"/>
        <dbReference type="ChEBI" id="CHEBI:58828"/>
        <dbReference type="EC" id="3.1.3.77"/>
    </reaction>
</comment>
<comment type="cofactor">
    <cofactor evidence="1">
        <name>Mg(2+)</name>
        <dbReference type="ChEBI" id="CHEBI:18420"/>
    </cofactor>
    <text evidence="1">Binds 1 Mg(2+) ion per subunit.</text>
</comment>
<comment type="pathway">
    <text evidence="1">Amino-acid biosynthesis; L-methionine biosynthesis via salvage pathway; L-methionine from S-methyl-5-thio-alpha-D-ribose 1-phosphate: step 3/6.</text>
</comment>
<comment type="pathway">
    <text evidence="1">Amino-acid biosynthesis; L-methionine biosynthesis via salvage pathway; L-methionine from S-methyl-5-thio-alpha-D-ribose 1-phosphate: step 4/6.</text>
</comment>
<comment type="subunit">
    <text evidence="1">Monomer.</text>
</comment>
<comment type="similarity">
    <text evidence="1">Belongs to the HAD-like hydrolase superfamily. MasA/MtnC family.</text>
</comment>